<gene>
    <name evidence="1" type="primary">pepQ</name>
    <name type="ordered locus">Spea_0019</name>
</gene>
<sequence length="440" mass="49988">MEQLARLYHDHIQVLNQRVSEIISRENLSGLVIHSGQPHRQFLDDMDYPFKVNPHFKAWLPVIENPNSWLVINGSDKPLLIFYRPVDFWHKVADEPSDFWAEHVDIKFLTKADKVAEYLPAGIDNWAYIGEHLDVADVLGFSRRNPDSVLSYLNYHRATKTDYELACMRKANEIAVTGHQAAKTAFYNGASEFEILQVYLSAISQGENQVPYSSIVALNENSAILHYTALEYTSPAQRRSFLIDAGANYNGYASDITRSYSFEKNIFDDLITAMDNMQLQIISMMKPGVSYAELHIQTHYKLAQILLDFDIVSGDVQGLVEQGITRVFFPHGLGHMLGIQVHDMGGFLSDEKGTHVAAPEAHPFLRCTRELDINQVLTIEPGVYIIDSLLAELKQDQRQSQINWNTVDVLRPFGGIRIEDNVIVHGDRIENMTRNLGLNR</sequence>
<name>PEPQ_SHEPA</name>
<evidence type="ECO:0000255" key="1">
    <source>
        <dbReference type="HAMAP-Rule" id="MF_01279"/>
    </source>
</evidence>
<dbReference type="EC" id="3.4.13.9" evidence="1"/>
<dbReference type="EMBL" id="CP000851">
    <property type="protein sequence ID" value="ABV85348.1"/>
    <property type="molecule type" value="Genomic_DNA"/>
</dbReference>
<dbReference type="RefSeq" id="WP_012153296.1">
    <property type="nucleotide sequence ID" value="NC_009901.1"/>
</dbReference>
<dbReference type="SMR" id="A8GYG1"/>
<dbReference type="STRING" id="398579.Spea_0019"/>
<dbReference type="MEROPS" id="M24.003"/>
<dbReference type="KEGG" id="spl:Spea_0019"/>
<dbReference type="eggNOG" id="COG0006">
    <property type="taxonomic scope" value="Bacteria"/>
</dbReference>
<dbReference type="HOGENOM" id="CLU_050675_0_0_6"/>
<dbReference type="OrthoDB" id="9806388at2"/>
<dbReference type="Proteomes" id="UP000002608">
    <property type="component" value="Chromosome"/>
</dbReference>
<dbReference type="GO" id="GO:0005829">
    <property type="term" value="C:cytosol"/>
    <property type="evidence" value="ECO:0007669"/>
    <property type="project" value="TreeGrafter"/>
</dbReference>
<dbReference type="GO" id="GO:0004177">
    <property type="term" value="F:aminopeptidase activity"/>
    <property type="evidence" value="ECO:0007669"/>
    <property type="project" value="TreeGrafter"/>
</dbReference>
<dbReference type="GO" id="GO:0046872">
    <property type="term" value="F:metal ion binding"/>
    <property type="evidence" value="ECO:0007669"/>
    <property type="project" value="UniProtKB-KW"/>
</dbReference>
<dbReference type="GO" id="GO:0008235">
    <property type="term" value="F:metalloexopeptidase activity"/>
    <property type="evidence" value="ECO:0007669"/>
    <property type="project" value="UniProtKB-UniRule"/>
</dbReference>
<dbReference type="GO" id="GO:0016795">
    <property type="term" value="F:phosphoric triester hydrolase activity"/>
    <property type="evidence" value="ECO:0007669"/>
    <property type="project" value="InterPro"/>
</dbReference>
<dbReference type="GO" id="GO:0102009">
    <property type="term" value="F:proline dipeptidase activity"/>
    <property type="evidence" value="ECO:0007669"/>
    <property type="project" value="UniProtKB-EC"/>
</dbReference>
<dbReference type="GO" id="GO:0006508">
    <property type="term" value="P:proteolysis"/>
    <property type="evidence" value="ECO:0007669"/>
    <property type="project" value="UniProtKB-KW"/>
</dbReference>
<dbReference type="CDD" id="cd01087">
    <property type="entry name" value="Prolidase"/>
    <property type="match status" value="1"/>
</dbReference>
<dbReference type="Gene3D" id="3.90.230.10">
    <property type="entry name" value="Creatinase/methionine aminopeptidase superfamily"/>
    <property type="match status" value="1"/>
</dbReference>
<dbReference type="Gene3D" id="3.40.350.10">
    <property type="entry name" value="Creatinase/prolidase N-terminal domain"/>
    <property type="match status" value="1"/>
</dbReference>
<dbReference type="HAMAP" id="MF_01279">
    <property type="entry name" value="X_Pro_dipeptid"/>
    <property type="match status" value="1"/>
</dbReference>
<dbReference type="InterPro" id="IPR029149">
    <property type="entry name" value="Creatin/AminoP/Spt16_N"/>
</dbReference>
<dbReference type="InterPro" id="IPR036005">
    <property type="entry name" value="Creatinase/aminopeptidase-like"/>
</dbReference>
<dbReference type="InterPro" id="IPR048819">
    <property type="entry name" value="PepQ_N"/>
</dbReference>
<dbReference type="InterPro" id="IPR000994">
    <property type="entry name" value="Pept_M24"/>
</dbReference>
<dbReference type="InterPro" id="IPR001131">
    <property type="entry name" value="Peptidase_M24B_aminopep-P_CS"/>
</dbReference>
<dbReference type="InterPro" id="IPR052433">
    <property type="entry name" value="X-Pro_dipept-like"/>
</dbReference>
<dbReference type="InterPro" id="IPR022846">
    <property type="entry name" value="X_Pro_dipept"/>
</dbReference>
<dbReference type="NCBIfam" id="NF010133">
    <property type="entry name" value="PRK13607.1"/>
    <property type="match status" value="1"/>
</dbReference>
<dbReference type="PANTHER" id="PTHR43226">
    <property type="entry name" value="XAA-PRO AMINOPEPTIDASE 3"/>
    <property type="match status" value="1"/>
</dbReference>
<dbReference type="PANTHER" id="PTHR43226:SF8">
    <property type="entry name" value="XAA-PRO DIPEPTIDASE"/>
    <property type="match status" value="1"/>
</dbReference>
<dbReference type="Pfam" id="PF21216">
    <property type="entry name" value="PepQ_N"/>
    <property type="match status" value="1"/>
</dbReference>
<dbReference type="Pfam" id="PF00557">
    <property type="entry name" value="Peptidase_M24"/>
    <property type="match status" value="1"/>
</dbReference>
<dbReference type="SUPFAM" id="SSF55920">
    <property type="entry name" value="Creatinase/aminopeptidase"/>
    <property type="match status" value="1"/>
</dbReference>
<dbReference type="PROSITE" id="PS00491">
    <property type="entry name" value="PROLINE_PEPTIDASE"/>
    <property type="match status" value="1"/>
</dbReference>
<keyword id="KW-0224">Dipeptidase</keyword>
<keyword id="KW-0378">Hydrolase</keyword>
<keyword id="KW-0464">Manganese</keyword>
<keyword id="KW-0479">Metal-binding</keyword>
<keyword id="KW-0482">Metalloprotease</keyword>
<keyword id="KW-0645">Protease</keyword>
<keyword id="KW-1185">Reference proteome</keyword>
<reference key="1">
    <citation type="submission" date="2007-10" db="EMBL/GenBank/DDBJ databases">
        <title>Complete sequence of Shewanella pealeana ATCC 700345.</title>
        <authorList>
            <consortium name="US DOE Joint Genome Institute"/>
            <person name="Copeland A."/>
            <person name="Lucas S."/>
            <person name="Lapidus A."/>
            <person name="Barry K."/>
            <person name="Glavina del Rio T."/>
            <person name="Dalin E."/>
            <person name="Tice H."/>
            <person name="Pitluck S."/>
            <person name="Chertkov O."/>
            <person name="Brettin T."/>
            <person name="Bruce D."/>
            <person name="Detter J.C."/>
            <person name="Han C."/>
            <person name="Schmutz J."/>
            <person name="Larimer F."/>
            <person name="Land M."/>
            <person name="Hauser L."/>
            <person name="Kyrpides N."/>
            <person name="Kim E."/>
            <person name="Zhao J.-S.Z."/>
            <person name="Manno D."/>
            <person name="Hawari J."/>
            <person name="Richardson P."/>
        </authorList>
    </citation>
    <scope>NUCLEOTIDE SEQUENCE [LARGE SCALE GENOMIC DNA]</scope>
    <source>
        <strain>ATCC 700345 / ANG-SQ1</strain>
    </source>
</reference>
<organism>
    <name type="scientific">Shewanella pealeana (strain ATCC 700345 / ANG-SQ1)</name>
    <dbReference type="NCBI Taxonomy" id="398579"/>
    <lineage>
        <taxon>Bacteria</taxon>
        <taxon>Pseudomonadati</taxon>
        <taxon>Pseudomonadota</taxon>
        <taxon>Gammaproteobacteria</taxon>
        <taxon>Alteromonadales</taxon>
        <taxon>Shewanellaceae</taxon>
        <taxon>Shewanella</taxon>
    </lineage>
</organism>
<feature type="chain" id="PRO_1000085888" description="Xaa-Pro dipeptidase">
    <location>
        <begin position="1"/>
        <end position="440"/>
    </location>
</feature>
<feature type="binding site" evidence="1">
    <location>
        <position position="244"/>
    </location>
    <ligand>
        <name>Mn(2+)</name>
        <dbReference type="ChEBI" id="CHEBI:29035"/>
        <label>2</label>
    </ligand>
</feature>
<feature type="binding site" evidence="1">
    <location>
        <position position="255"/>
    </location>
    <ligand>
        <name>Mn(2+)</name>
        <dbReference type="ChEBI" id="CHEBI:29035"/>
        <label>1</label>
    </ligand>
</feature>
<feature type="binding site" evidence="1">
    <location>
        <position position="255"/>
    </location>
    <ligand>
        <name>Mn(2+)</name>
        <dbReference type="ChEBI" id="CHEBI:29035"/>
        <label>2</label>
    </ligand>
</feature>
<feature type="binding site" evidence="1">
    <location>
        <position position="335"/>
    </location>
    <ligand>
        <name>Mn(2+)</name>
        <dbReference type="ChEBI" id="CHEBI:29035"/>
        <label>1</label>
    </ligand>
</feature>
<feature type="binding site" evidence="1">
    <location>
        <position position="380"/>
    </location>
    <ligand>
        <name>Mn(2+)</name>
        <dbReference type="ChEBI" id="CHEBI:29035"/>
        <label>1</label>
    </ligand>
</feature>
<feature type="binding site" evidence="1">
    <location>
        <position position="419"/>
    </location>
    <ligand>
        <name>Mn(2+)</name>
        <dbReference type="ChEBI" id="CHEBI:29035"/>
        <label>1</label>
    </ligand>
</feature>
<feature type="binding site" evidence="1">
    <location>
        <position position="419"/>
    </location>
    <ligand>
        <name>Mn(2+)</name>
        <dbReference type="ChEBI" id="CHEBI:29035"/>
        <label>2</label>
    </ligand>
</feature>
<accession>A8GYG1</accession>
<protein>
    <recommendedName>
        <fullName evidence="1">Xaa-Pro dipeptidase</fullName>
        <shortName evidence="1">X-Pro dipeptidase</shortName>
        <ecNumber evidence="1">3.4.13.9</ecNumber>
    </recommendedName>
    <alternativeName>
        <fullName evidence="1">Imidodipeptidase</fullName>
    </alternativeName>
    <alternativeName>
        <fullName evidence="1">Proline dipeptidase</fullName>
        <shortName evidence="1">Prolidase</shortName>
    </alternativeName>
</protein>
<proteinExistence type="inferred from homology"/>
<comment type="function">
    <text evidence="1">Splits dipeptides with a prolyl residue in the C-terminal position.</text>
</comment>
<comment type="catalytic activity">
    <reaction evidence="1">
        <text>Xaa-L-Pro dipeptide + H2O = an L-alpha-amino acid + L-proline</text>
        <dbReference type="Rhea" id="RHEA:76407"/>
        <dbReference type="ChEBI" id="CHEBI:15377"/>
        <dbReference type="ChEBI" id="CHEBI:59869"/>
        <dbReference type="ChEBI" id="CHEBI:60039"/>
        <dbReference type="ChEBI" id="CHEBI:195196"/>
        <dbReference type="EC" id="3.4.13.9"/>
    </reaction>
</comment>
<comment type="cofactor">
    <cofactor evidence="1">
        <name>Mn(2+)</name>
        <dbReference type="ChEBI" id="CHEBI:29035"/>
    </cofactor>
    <text evidence="1">Binds 2 manganese ions per subunit.</text>
</comment>
<comment type="similarity">
    <text evidence="1">Belongs to the peptidase M24B family. Bacterial-type prolidase subfamily.</text>
</comment>